<protein>
    <recommendedName>
        <fullName evidence="1">Regulatory protein RecX</fullName>
    </recommendedName>
</protein>
<comment type="function">
    <text evidence="1">Modulates RecA activity.</text>
</comment>
<comment type="subcellular location">
    <subcellularLocation>
        <location evidence="1">Cytoplasm</location>
    </subcellularLocation>
</comment>
<comment type="similarity">
    <text evidence="1">Belongs to the RecX family.</text>
</comment>
<organism>
    <name type="scientific">Pseudomonas putida (strain GB-1)</name>
    <dbReference type="NCBI Taxonomy" id="76869"/>
    <lineage>
        <taxon>Bacteria</taxon>
        <taxon>Pseudomonadati</taxon>
        <taxon>Pseudomonadota</taxon>
        <taxon>Gammaproteobacteria</taxon>
        <taxon>Pseudomonadales</taxon>
        <taxon>Pseudomonadaceae</taxon>
        <taxon>Pseudomonas</taxon>
    </lineage>
</organism>
<name>RECX_PSEPG</name>
<dbReference type="EMBL" id="CP000926">
    <property type="protein sequence ID" value="ABY97139.1"/>
    <property type="molecule type" value="Genomic_DNA"/>
</dbReference>
<dbReference type="RefSeq" id="WP_012270916.1">
    <property type="nucleotide sequence ID" value="NC_010322.1"/>
</dbReference>
<dbReference type="SMR" id="B0KT21"/>
<dbReference type="KEGG" id="ppg:PputGB1_1232"/>
<dbReference type="eggNOG" id="COG2137">
    <property type="taxonomic scope" value="Bacteria"/>
</dbReference>
<dbReference type="HOGENOM" id="CLU_066607_3_2_6"/>
<dbReference type="Proteomes" id="UP000002157">
    <property type="component" value="Chromosome"/>
</dbReference>
<dbReference type="GO" id="GO:0005737">
    <property type="term" value="C:cytoplasm"/>
    <property type="evidence" value="ECO:0007669"/>
    <property type="project" value="UniProtKB-SubCell"/>
</dbReference>
<dbReference type="GO" id="GO:0006282">
    <property type="term" value="P:regulation of DNA repair"/>
    <property type="evidence" value="ECO:0007669"/>
    <property type="project" value="UniProtKB-UniRule"/>
</dbReference>
<dbReference type="Gene3D" id="1.10.10.10">
    <property type="entry name" value="Winged helix-like DNA-binding domain superfamily/Winged helix DNA-binding domain"/>
    <property type="match status" value="3"/>
</dbReference>
<dbReference type="HAMAP" id="MF_01114">
    <property type="entry name" value="RecX"/>
    <property type="match status" value="1"/>
</dbReference>
<dbReference type="InterPro" id="IPR053926">
    <property type="entry name" value="RecX_HTH_1st"/>
</dbReference>
<dbReference type="InterPro" id="IPR053924">
    <property type="entry name" value="RecX_HTH_2nd"/>
</dbReference>
<dbReference type="InterPro" id="IPR053925">
    <property type="entry name" value="RecX_HTH_3rd"/>
</dbReference>
<dbReference type="InterPro" id="IPR003783">
    <property type="entry name" value="Regulatory_RecX"/>
</dbReference>
<dbReference type="InterPro" id="IPR036388">
    <property type="entry name" value="WH-like_DNA-bd_sf"/>
</dbReference>
<dbReference type="NCBIfam" id="NF001054">
    <property type="entry name" value="PRK00117.2-1"/>
    <property type="match status" value="1"/>
</dbReference>
<dbReference type="PANTHER" id="PTHR33602">
    <property type="entry name" value="REGULATORY PROTEIN RECX FAMILY PROTEIN"/>
    <property type="match status" value="1"/>
</dbReference>
<dbReference type="PANTHER" id="PTHR33602:SF1">
    <property type="entry name" value="REGULATORY PROTEIN RECX FAMILY PROTEIN"/>
    <property type="match status" value="1"/>
</dbReference>
<dbReference type="Pfam" id="PF21982">
    <property type="entry name" value="RecX_HTH1"/>
    <property type="match status" value="1"/>
</dbReference>
<dbReference type="Pfam" id="PF02631">
    <property type="entry name" value="RecX_HTH2"/>
    <property type="match status" value="1"/>
</dbReference>
<dbReference type="Pfam" id="PF21981">
    <property type="entry name" value="RecX_HTH3"/>
    <property type="match status" value="1"/>
</dbReference>
<evidence type="ECO:0000255" key="1">
    <source>
        <dbReference type="HAMAP-Rule" id="MF_01114"/>
    </source>
</evidence>
<reference key="1">
    <citation type="submission" date="2008-01" db="EMBL/GenBank/DDBJ databases">
        <title>Complete sequence of Pseudomonas putida GB-1.</title>
        <authorList>
            <consortium name="US DOE Joint Genome Institute"/>
            <person name="Copeland A."/>
            <person name="Lucas S."/>
            <person name="Lapidus A."/>
            <person name="Barry K."/>
            <person name="Glavina del Rio T."/>
            <person name="Dalin E."/>
            <person name="Tice H."/>
            <person name="Pitluck S."/>
            <person name="Bruce D."/>
            <person name="Goodwin L."/>
            <person name="Chertkov O."/>
            <person name="Brettin T."/>
            <person name="Detter J.C."/>
            <person name="Han C."/>
            <person name="Kuske C.R."/>
            <person name="Schmutz J."/>
            <person name="Larimer F."/>
            <person name="Land M."/>
            <person name="Hauser L."/>
            <person name="Kyrpides N."/>
            <person name="Kim E."/>
            <person name="McCarthy J.K."/>
            <person name="Richardson P."/>
        </authorList>
    </citation>
    <scope>NUCLEOTIDE SEQUENCE [LARGE SCALE GENOMIC DNA]</scope>
    <source>
        <strain>GB-1</strain>
    </source>
</reference>
<feature type="chain" id="PRO_1000084987" description="Regulatory protein RecX">
    <location>
        <begin position="1"/>
        <end position="156"/>
    </location>
</feature>
<sequence>MSAVLDTPVAIRRTAMDLLARREHGRVELTRKLRQRGASDELIEPELDRLAEEGLLSEARYLESFIRYRSGSGYGPSRIREELGQRGLARADIEQALRESEVDWRERMHDVWQRKFAGQRPQDPRSRAQQTRFLAYRGFPMDMIGRLLSGRDLDDY</sequence>
<accession>B0KT21</accession>
<gene>
    <name evidence="1" type="primary">recX</name>
    <name type="ordered locus">PputGB1_1232</name>
</gene>
<keyword id="KW-0963">Cytoplasm</keyword>
<proteinExistence type="inferred from homology"/>